<name>SCP_SHV21</name>
<accession>Q01047</accession>
<organismHost>
    <name type="scientific">Saimiri sciureus</name>
    <name type="common">Common squirrel monkey</name>
    <dbReference type="NCBI Taxonomy" id="9521"/>
</organismHost>
<reference key="1">
    <citation type="journal article" date="1992" name="J. Virol.">
        <title>Primary structure of the herpesvirus saimiri genome.</title>
        <authorList>
            <person name="Albrecht J.-C."/>
            <person name="Nicholas J."/>
            <person name="Biller D."/>
            <person name="Cameron K.R."/>
            <person name="Biesinger B."/>
            <person name="Newman C."/>
            <person name="Wittmann S."/>
            <person name="Craxton M.A."/>
            <person name="Coleman H."/>
            <person name="Fleckenstein B."/>
            <person name="Honess R.W."/>
        </authorList>
    </citation>
    <scope>NUCLEOTIDE SEQUENCE [LARGE SCALE GENOMIC DNA]</scope>
</reference>
<reference key="2">
    <citation type="journal article" date="1992" name="Virology">
        <title>Analysis of nucleotide sequence of the rightmost 43 kbp of herpesvirus saimiri (HVS) L-DNA: general conservation of genetic organization between HVS and Epstein-Barr virus.</title>
        <authorList>
            <person name="Nicholas J."/>
            <person name="Cameron K.R."/>
            <person name="Coleman H."/>
            <person name="Newman C."/>
            <person name="Honess R.W."/>
        </authorList>
    </citation>
    <scope>NUCLEOTIDE SEQUENCE [GENOMIC DNA]</scope>
</reference>
<comment type="function">
    <text evidence="1">Participates in the assembly of the infectious particles by decorating the outer surface of the capsid shell and thus forming a layer between the capsid and the tegument. Complexes composed of the major capsid protein and small capsomere-interacting protein/SCP assemble together in the host cytoplasm and are translocated to the nucleus, where they accumulate and participate in capsid assembly.</text>
</comment>
<comment type="subunit">
    <text evidence="1">Interacts with the major capsid protein/MCP.</text>
</comment>
<comment type="subcellular location">
    <subcellularLocation>
        <location evidence="1">Virion</location>
    </subcellularLocation>
    <subcellularLocation>
        <location evidence="1">Host nucleus</location>
    </subcellularLocation>
</comment>
<comment type="similarity">
    <text evidence="1">Belongs to the herpesviridae small capsomere-interacting protein family.</text>
</comment>
<sequence length="139" mass="15344">MHRLRVTDPVVQGKLEESDSTHELVKRLEILPQNNMTPEEYTLMKRNYLVFLIAQYNFDQYIETTHGIKRKKHIEGLKANLKPSALSADSASLSGLLSTSLTTPSLSSTPTSLTSMPGLSISGPSTTDTIDSKKKPKAK</sequence>
<dbReference type="EMBL" id="X64346">
    <property type="protein sequence ID" value="CAA45688.1"/>
    <property type="molecule type" value="Genomic_DNA"/>
</dbReference>
<dbReference type="EMBL" id="M86409">
    <property type="protein sequence ID" value="AAA46141.1"/>
    <property type="molecule type" value="Genomic_DNA"/>
</dbReference>
<dbReference type="RefSeq" id="NP_040267.1">
    <property type="nucleotide sequence ID" value="NC_001350.1"/>
</dbReference>
<dbReference type="SMR" id="Q01047"/>
<dbReference type="KEGG" id="vg:1682507"/>
<dbReference type="Proteomes" id="UP000000587">
    <property type="component" value="Segment"/>
</dbReference>
<dbReference type="GO" id="GO:0042025">
    <property type="term" value="C:host cell nucleus"/>
    <property type="evidence" value="ECO:0007669"/>
    <property type="project" value="UniProtKB-SubCell"/>
</dbReference>
<dbReference type="GO" id="GO:0019028">
    <property type="term" value="C:viral capsid"/>
    <property type="evidence" value="ECO:0007669"/>
    <property type="project" value="UniProtKB-UniRule"/>
</dbReference>
<dbReference type="GO" id="GO:0016032">
    <property type="term" value="P:viral process"/>
    <property type="evidence" value="ECO:0007669"/>
    <property type="project" value="UniProtKB-UniRule"/>
</dbReference>
<dbReference type="HAMAP" id="MF_04022">
    <property type="entry name" value="HSV_SCP_gammahv"/>
    <property type="match status" value="1"/>
</dbReference>
<dbReference type="InterPro" id="IPR009299">
    <property type="entry name" value="Herpes_capsid"/>
</dbReference>
<dbReference type="Pfam" id="PF06112">
    <property type="entry name" value="Herpes_capsid"/>
    <property type="match status" value="1"/>
</dbReference>
<protein>
    <recommendedName>
        <fullName evidence="1">Small capsomere-interacting protein</fullName>
    </recommendedName>
</protein>
<organism>
    <name type="scientific">Saimiriine herpesvirus 2 (strain 11)</name>
    <name type="common">SaHV-2</name>
    <name type="synonym">Herpesvirus saimiri</name>
    <dbReference type="NCBI Taxonomy" id="10383"/>
    <lineage>
        <taxon>Viruses</taxon>
        <taxon>Duplodnaviria</taxon>
        <taxon>Heunggongvirae</taxon>
        <taxon>Peploviricota</taxon>
        <taxon>Herviviricetes</taxon>
        <taxon>Herpesvirales</taxon>
        <taxon>Orthoherpesviridae</taxon>
        <taxon>Gammaherpesvirinae</taxon>
        <taxon>Rhadinovirus</taxon>
        <taxon>Rhadinovirus saimiriinegamma2</taxon>
        <taxon>Saimiriine herpesvirus 2</taxon>
    </lineage>
</organism>
<feature type="chain" id="PRO_0000115738" description="Small capsomere-interacting protein">
    <location>
        <begin position="1"/>
        <end position="139"/>
    </location>
</feature>
<feature type="region of interest" description="Disordered" evidence="2">
    <location>
        <begin position="100"/>
        <end position="139"/>
    </location>
</feature>
<feature type="compositionally biased region" description="Low complexity" evidence="2">
    <location>
        <begin position="100"/>
        <end position="120"/>
    </location>
</feature>
<proteinExistence type="inferred from homology"/>
<evidence type="ECO:0000255" key="1">
    <source>
        <dbReference type="HAMAP-Rule" id="MF_04022"/>
    </source>
</evidence>
<evidence type="ECO:0000256" key="2">
    <source>
        <dbReference type="SAM" id="MobiDB-lite"/>
    </source>
</evidence>
<gene>
    <name evidence="1" type="primary">SCP</name>
    <name type="ordered locus">65</name>
    <name type="ordered locus">ECLF7</name>
</gene>
<keyword id="KW-0167">Capsid protein</keyword>
<keyword id="KW-1048">Host nucleus</keyword>
<keyword id="KW-1185">Reference proteome</keyword>
<keyword id="KW-0946">Virion</keyword>